<keyword id="KW-0143">Chaperone</keyword>
<keyword id="KW-0472">Membrane</keyword>
<keyword id="KW-0496">Mitochondrion</keyword>
<keyword id="KW-0999">Mitochondrion inner membrane</keyword>
<keyword id="KW-0653">Protein transport</keyword>
<keyword id="KW-1185">Reference proteome</keyword>
<keyword id="KW-0811">Translocation</keyword>
<keyword id="KW-0812">Transmembrane</keyword>
<keyword id="KW-1133">Transmembrane helix</keyword>
<keyword id="KW-0813">Transport</keyword>
<gene>
    <name type="primary">PAM18</name>
    <name type="synonym">TIM14</name>
    <name type="ordered locus">CAALFM_C400520WA</name>
    <name type="ORF">CaO19.11667</name>
    <name type="ORF">CaO19.4190</name>
</gene>
<evidence type="ECO:0000250" key="1"/>
<evidence type="ECO:0000255" key="2"/>
<evidence type="ECO:0000255" key="3">
    <source>
        <dbReference type="PROSITE-ProRule" id="PRU00286"/>
    </source>
</evidence>
<evidence type="ECO:0000305" key="4"/>
<comment type="function">
    <text evidence="1">Essential component of the PAM complex, a complex required for the translocation of transit peptide-containing proteins from the inner membrane into the mitochondrial matrix in an ATP-dependent manner. In the complex, it is required to stimulate activity of mtHSP70 (SSC1) (By similarity).</text>
</comment>
<comment type="subunit">
    <text evidence="1">Heterodimer with PAM16. Component of the PAM complex, at least composed of mtHsp70, MGE1, TIM44, PAM16, PAM17 and PAM18 (By similarity).</text>
</comment>
<comment type="subcellular location">
    <subcellularLocation>
        <location evidence="1">Mitochondrion inner membrane</location>
        <topology evidence="1">Single-pass membrane protein</topology>
    </subcellularLocation>
</comment>
<comment type="domain">
    <text evidence="1">The J domain is essential for co-chaperone activity and mediates the heterodimerization with the J-like domain of PAM16.</text>
</comment>
<comment type="similarity">
    <text evidence="4">Belongs to the TIM14 family.</text>
</comment>
<sequence length="157" mass="17297">MAPLEAPILAIPGENNTHQQQQQQFQYTGQLQKKKAAEGSIEWYFDQTINFMGDHPVITGIGAFAVAYFAAGFIKSNQPGINGKAFVKGGFGAKMTAKEALQILNLKETNLSKLKLKEQHRKLMMANHPDKGGSSYIATKINEAKDFLDKRGGMKPK</sequence>
<feature type="chain" id="PRO_0000071109" description="Mitochondrial import inner membrane translocase subunit TIM14">
    <location>
        <begin position="1"/>
        <end position="157"/>
    </location>
</feature>
<feature type="topological domain" description="Mitochondrial intermembrane" evidence="2">
    <location>
        <begin position="1"/>
        <end position="56"/>
    </location>
</feature>
<feature type="transmembrane region" description="Helical" evidence="2">
    <location>
        <begin position="57"/>
        <end position="74"/>
    </location>
</feature>
<feature type="topological domain" description="Mitochondrial matrix" evidence="2">
    <location>
        <begin position="75"/>
        <end position="157"/>
    </location>
</feature>
<feature type="domain" description="J" evidence="3">
    <location>
        <begin position="99"/>
        <end position="157"/>
    </location>
</feature>
<accession>Q59SI2</accession>
<accession>A0A1D8PL20</accession>
<organism>
    <name type="scientific">Candida albicans (strain SC5314 / ATCC MYA-2876)</name>
    <name type="common">Yeast</name>
    <dbReference type="NCBI Taxonomy" id="237561"/>
    <lineage>
        <taxon>Eukaryota</taxon>
        <taxon>Fungi</taxon>
        <taxon>Dikarya</taxon>
        <taxon>Ascomycota</taxon>
        <taxon>Saccharomycotina</taxon>
        <taxon>Pichiomycetes</taxon>
        <taxon>Debaryomycetaceae</taxon>
        <taxon>Candida/Lodderomyces clade</taxon>
        <taxon>Candida</taxon>
    </lineage>
</organism>
<protein>
    <recommendedName>
        <fullName>Mitochondrial import inner membrane translocase subunit TIM14</fullName>
    </recommendedName>
    <alternativeName>
        <fullName>Presequence translocated-associated motor subunit PAM18</fullName>
    </alternativeName>
</protein>
<name>TIM14_CANAL</name>
<proteinExistence type="inferred from homology"/>
<reference key="1">
    <citation type="journal article" date="2004" name="Proc. Natl. Acad. Sci. U.S.A.">
        <title>The diploid genome sequence of Candida albicans.</title>
        <authorList>
            <person name="Jones T."/>
            <person name="Federspiel N.A."/>
            <person name="Chibana H."/>
            <person name="Dungan J."/>
            <person name="Kalman S."/>
            <person name="Magee B.B."/>
            <person name="Newport G."/>
            <person name="Thorstenson Y.R."/>
            <person name="Agabian N."/>
            <person name="Magee P.T."/>
            <person name="Davis R.W."/>
            <person name="Scherer S."/>
        </authorList>
    </citation>
    <scope>NUCLEOTIDE SEQUENCE [LARGE SCALE GENOMIC DNA]</scope>
    <source>
        <strain>SC5314 / ATCC MYA-2876</strain>
    </source>
</reference>
<reference key="2">
    <citation type="journal article" date="2007" name="Genome Biol.">
        <title>Assembly of the Candida albicans genome into sixteen supercontigs aligned on the eight chromosomes.</title>
        <authorList>
            <person name="van het Hoog M."/>
            <person name="Rast T.J."/>
            <person name="Martchenko M."/>
            <person name="Grindle S."/>
            <person name="Dignard D."/>
            <person name="Hogues H."/>
            <person name="Cuomo C."/>
            <person name="Berriman M."/>
            <person name="Scherer S."/>
            <person name="Magee B.B."/>
            <person name="Whiteway M."/>
            <person name="Chibana H."/>
            <person name="Nantel A."/>
            <person name="Magee P.T."/>
        </authorList>
    </citation>
    <scope>GENOME REANNOTATION</scope>
    <source>
        <strain>SC5314 / ATCC MYA-2876</strain>
    </source>
</reference>
<reference key="3">
    <citation type="journal article" date="2013" name="Genome Biol.">
        <title>Assembly of a phased diploid Candida albicans genome facilitates allele-specific measurements and provides a simple model for repeat and indel structure.</title>
        <authorList>
            <person name="Muzzey D."/>
            <person name="Schwartz K."/>
            <person name="Weissman J.S."/>
            <person name="Sherlock G."/>
        </authorList>
    </citation>
    <scope>NUCLEOTIDE SEQUENCE [LARGE SCALE GENOMIC DNA]</scope>
    <scope>GENOME REANNOTATION</scope>
    <source>
        <strain>SC5314 / ATCC MYA-2876</strain>
    </source>
</reference>
<dbReference type="EMBL" id="CP017626">
    <property type="protein sequence ID" value="AOW28845.1"/>
    <property type="molecule type" value="Genomic_DNA"/>
</dbReference>
<dbReference type="RefSeq" id="XP_712644.1">
    <property type="nucleotide sequence ID" value="XM_707551.1"/>
</dbReference>
<dbReference type="SMR" id="Q59SI2"/>
<dbReference type="FunCoup" id="Q59SI2">
    <property type="interactions" value="46"/>
</dbReference>
<dbReference type="STRING" id="237561.Q59SI2"/>
<dbReference type="EnsemblFungi" id="C4_00520W_A-T">
    <property type="protein sequence ID" value="C4_00520W_A-T-p1"/>
    <property type="gene ID" value="C4_00520W_A"/>
</dbReference>
<dbReference type="GeneID" id="3645747"/>
<dbReference type="KEGG" id="cal:CAALFM_C400520WA"/>
<dbReference type="CGD" id="CAL0000200634">
    <property type="gene designation" value="PAM18"/>
</dbReference>
<dbReference type="VEuPathDB" id="FungiDB:C4_00520W_A"/>
<dbReference type="HOGENOM" id="CLU_017633_13_0_1"/>
<dbReference type="InParanoid" id="Q59SI2"/>
<dbReference type="OMA" id="EGSAEWY"/>
<dbReference type="OrthoDB" id="240298at2759"/>
<dbReference type="PRO" id="PR:Q59SI2"/>
<dbReference type="Proteomes" id="UP000000559">
    <property type="component" value="Chromosome 4"/>
</dbReference>
<dbReference type="GO" id="GO:0001405">
    <property type="term" value="C:PAM complex, Tim23 associated import motor"/>
    <property type="evidence" value="ECO:0000318"/>
    <property type="project" value="GO_Central"/>
</dbReference>
<dbReference type="GO" id="GO:0001671">
    <property type="term" value="F:ATPase activator activity"/>
    <property type="evidence" value="ECO:0000318"/>
    <property type="project" value="GO_Central"/>
</dbReference>
<dbReference type="GO" id="GO:0030150">
    <property type="term" value="P:protein import into mitochondrial matrix"/>
    <property type="evidence" value="ECO:0000318"/>
    <property type="project" value="GO_Central"/>
</dbReference>
<dbReference type="CDD" id="cd06257">
    <property type="entry name" value="DnaJ"/>
    <property type="match status" value="1"/>
</dbReference>
<dbReference type="FunFam" id="1.10.287.110:FF:000001">
    <property type="entry name" value="Import inner membrane translocase subunit tim14"/>
    <property type="match status" value="1"/>
</dbReference>
<dbReference type="Gene3D" id="1.10.287.110">
    <property type="entry name" value="DnaJ domain"/>
    <property type="match status" value="1"/>
</dbReference>
<dbReference type="InterPro" id="IPR001623">
    <property type="entry name" value="DnaJ_domain"/>
</dbReference>
<dbReference type="InterPro" id="IPR036869">
    <property type="entry name" value="J_dom_sf"/>
</dbReference>
<dbReference type="PANTHER" id="PTHR12763">
    <property type="match status" value="1"/>
</dbReference>
<dbReference type="PANTHER" id="PTHR12763:SF28">
    <property type="entry name" value="GEO10507P1-RELATED"/>
    <property type="match status" value="1"/>
</dbReference>
<dbReference type="SMART" id="SM00271">
    <property type="entry name" value="DnaJ"/>
    <property type="match status" value="1"/>
</dbReference>
<dbReference type="SUPFAM" id="SSF46565">
    <property type="entry name" value="Chaperone J-domain"/>
    <property type="match status" value="1"/>
</dbReference>
<dbReference type="PROSITE" id="PS50076">
    <property type="entry name" value="DNAJ_2"/>
    <property type="match status" value="1"/>
</dbReference>